<protein>
    <recommendedName>
        <fullName>Potassium channel subfamily T member 2</fullName>
    </recommendedName>
    <alternativeName>
        <fullName>Sequence like an intermediate conductance potassium channel subunit</fullName>
    </alternativeName>
    <alternativeName>
        <fullName>Sodium and chloride-activated ATP-sensitive potassium channel Slo2.1</fullName>
    </alternativeName>
</protein>
<keyword id="KW-1003">Cell membrane</keyword>
<keyword id="KW-0325">Glycoprotein</keyword>
<keyword id="KW-0407">Ion channel</keyword>
<keyword id="KW-0406">Ion transport</keyword>
<keyword id="KW-0472">Membrane</keyword>
<keyword id="KW-0597">Phosphoprotein</keyword>
<keyword id="KW-0630">Potassium</keyword>
<keyword id="KW-0631">Potassium channel</keyword>
<keyword id="KW-0633">Potassium transport</keyword>
<keyword id="KW-1185">Reference proteome</keyword>
<keyword id="KW-0812">Transmembrane</keyword>
<keyword id="KW-1133">Transmembrane helix</keyword>
<keyword id="KW-0813">Transport</keyword>
<feature type="chain" id="PRO_0000312504" description="Potassium channel subfamily T member 2">
    <location>
        <begin position="1"/>
        <end position="1142"/>
    </location>
</feature>
<feature type="topological domain" description="Cytoplasmic" evidence="3">
    <location>
        <begin position="1"/>
        <end position="63"/>
    </location>
</feature>
<feature type="transmembrane region" description="Helical; Name=Segment S1" evidence="3">
    <location>
        <begin position="64"/>
        <end position="84"/>
    </location>
</feature>
<feature type="topological domain" description="Extracellular" evidence="3">
    <location>
        <begin position="85"/>
        <end position="101"/>
    </location>
</feature>
<feature type="transmembrane region" description="Helical; Name=Segment S2" evidence="3">
    <location>
        <begin position="102"/>
        <end position="122"/>
    </location>
</feature>
<feature type="topological domain" description="Cytoplasmic" evidence="3">
    <location>
        <begin position="123"/>
        <end position="137"/>
    </location>
</feature>
<feature type="transmembrane region" description="Helical; Name=Segment S3" evidence="3">
    <location>
        <begin position="138"/>
        <end position="158"/>
    </location>
</feature>
<feature type="topological domain" description="Extracellular" evidence="3">
    <location>
        <begin position="159"/>
        <end position="160"/>
    </location>
</feature>
<feature type="transmembrane region" description="Helical; Name=Segment S4" evidence="3">
    <location>
        <begin position="161"/>
        <end position="173"/>
    </location>
</feature>
<feature type="topological domain" description="Cytoplasmic" evidence="3">
    <location>
        <begin position="174"/>
        <end position="198"/>
    </location>
</feature>
<feature type="transmembrane region" description="Helical; Name=Segment S5" evidence="3">
    <location>
        <begin position="199"/>
        <end position="219"/>
    </location>
</feature>
<feature type="topological domain" description="Extracellular" evidence="3">
    <location>
        <begin position="220"/>
        <end position="228"/>
    </location>
</feature>
<feature type="intramembrane region" description="Pore-forming" evidence="3">
    <location>
        <begin position="229"/>
        <end position="249"/>
    </location>
</feature>
<feature type="topological domain" description="Extracellular" evidence="3">
    <location>
        <begin position="250"/>
        <end position="256"/>
    </location>
</feature>
<feature type="transmembrane region" description="Helical; Name=Segment S6" evidence="3">
    <location>
        <begin position="257"/>
        <end position="277"/>
    </location>
</feature>
<feature type="topological domain" description="Cytoplasmic" evidence="3">
    <location>
        <begin position="278"/>
        <end position="1142"/>
    </location>
</feature>
<feature type="domain" description="RCK N-terminal 1" evidence="4">
    <location>
        <begin position="299"/>
        <end position="435"/>
    </location>
</feature>
<feature type="domain" description="RCK N-terminal 2" evidence="4">
    <location>
        <begin position="725"/>
        <end position="865"/>
    </location>
</feature>
<feature type="region of interest" description="Disordered" evidence="5">
    <location>
        <begin position="989"/>
        <end position="1044"/>
    </location>
</feature>
<feature type="region of interest" description="Disordered" evidence="5">
    <location>
        <begin position="1118"/>
        <end position="1142"/>
    </location>
</feature>
<feature type="compositionally biased region" description="Basic residues" evidence="5">
    <location>
        <begin position="1017"/>
        <end position="1037"/>
    </location>
</feature>
<feature type="compositionally biased region" description="Polar residues" evidence="5">
    <location>
        <begin position="1118"/>
        <end position="1129"/>
    </location>
</feature>
<feature type="glycosylation site" description="N-linked (GlcNAc...) asparagine" evidence="3">
    <location>
        <position position="99"/>
    </location>
</feature>
<feature type="mutagenesis site" description="Loss of chloride-activated potassium channel activity. Loss of potassium selectivity. Inhibited by chloride. Expression in primary dorsal root ganglion neurons induces membrane hyperexcitability and neuronal toxicity." evidence="11">
    <original>F</original>
    <variation>L</variation>
    <location>
        <position position="240"/>
    </location>
</feature>
<feature type="mutagenesis site" description="Greatly increases unitary conductance of the channel; when associated with 279-E." evidence="10">
    <original>Q</original>
    <variation>E</variation>
    <location>
        <position position="276"/>
    </location>
</feature>
<feature type="mutagenesis site" description="Greatly increases unitary conductance of the channel; when associated with 276-E." evidence="10">
    <original>Y</original>
    <variation>E</variation>
    <location>
        <position position="279"/>
    </location>
</feature>
<feature type="mutagenesis site" description="Loss of channel inactivation by ATP." evidence="6">
    <original>G</original>
    <variation>S</variation>
    <location>
        <position position="1032"/>
    </location>
</feature>
<organism>
    <name type="scientific">Rattus norvegicus</name>
    <name type="common">Rat</name>
    <dbReference type="NCBI Taxonomy" id="10116"/>
    <lineage>
        <taxon>Eukaryota</taxon>
        <taxon>Metazoa</taxon>
        <taxon>Chordata</taxon>
        <taxon>Craniata</taxon>
        <taxon>Vertebrata</taxon>
        <taxon>Euteleostomi</taxon>
        <taxon>Mammalia</taxon>
        <taxon>Eutheria</taxon>
        <taxon>Euarchontoglires</taxon>
        <taxon>Glires</taxon>
        <taxon>Rodentia</taxon>
        <taxon>Myomorpha</taxon>
        <taxon>Muroidea</taxon>
        <taxon>Muridae</taxon>
        <taxon>Murinae</taxon>
        <taxon>Rattus</taxon>
    </lineage>
</organism>
<dbReference type="EMBL" id="AY359443">
    <property type="protein sequence ID" value="AAR06169.1"/>
    <property type="molecule type" value="mRNA"/>
</dbReference>
<dbReference type="RefSeq" id="NP_942057.1">
    <property type="nucleotide sequence ID" value="NM_198762.1"/>
</dbReference>
<dbReference type="SMR" id="Q6UVM4"/>
<dbReference type="FunCoup" id="Q6UVM4">
    <property type="interactions" value="1339"/>
</dbReference>
<dbReference type="STRING" id="10116.ENSRNOP00000017884"/>
<dbReference type="GlyCosmos" id="Q6UVM4">
    <property type="glycosylation" value="1 site, No reported glycans"/>
</dbReference>
<dbReference type="GlyGen" id="Q6UVM4">
    <property type="glycosylation" value="1 site"/>
</dbReference>
<dbReference type="PhosphoSitePlus" id="Q6UVM4"/>
<dbReference type="PaxDb" id="10116-ENSRNOP00000017884"/>
<dbReference type="ABCD" id="Q6UVM4">
    <property type="antibodies" value="1 sequenced antibody"/>
</dbReference>
<dbReference type="GeneID" id="304827"/>
<dbReference type="KEGG" id="rno:304827"/>
<dbReference type="UCSC" id="RGD:735074">
    <property type="organism name" value="rat"/>
</dbReference>
<dbReference type="AGR" id="RGD:735074"/>
<dbReference type="CTD" id="343450"/>
<dbReference type="RGD" id="735074">
    <property type="gene designation" value="Kcnt2"/>
</dbReference>
<dbReference type="VEuPathDB" id="HostDB:ENSRNOG00000013312"/>
<dbReference type="eggNOG" id="KOG3193">
    <property type="taxonomic scope" value="Eukaryota"/>
</dbReference>
<dbReference type="InParanoid" id="Q6UVM4"/>
<dbReference type="OrthoDB" id="6512999at2759"/>
<dbReference type="PhylomeDB" id="Q6UVM4"/>
<dbReference type="PRO" id="PR:Q6UVM4"/>
<dbReference type="Proteomes" id="UP000002494">
    <property type="component" value="Chromosome 13"/>
</dbReference>
<dbReference type="Bgee" id="ENSRNOG00000013312">
    <property type="expression patterns" value="Expressed in frontal cortex and 10 other cell types or tissues"/>
</dbReference>
<dbReference type="ExpressionAtlas" id="Q6UVM4">
    <property type="expression patterns" value="baseline and differential"/>
</dbReference>
<dbReference type="GO" id="GO:0005886">
    <property type="term" value="C:plasma membrane"/>
    <property type="evidence" value="ECO:0000250"/>
    <property type="project" value="UniProtKB"/>
</dbReference>
<dbReference type="GO" id="GO:0005524">
    <property type="term" value="F:ATP binding"/>
    <property type="evidence" value="ECO:0000304"/>
    <property type="project" value="RGD"/>
</dbReference>
<dbReference type="GO" id="GO:0070089">
    <property type="term" value="F:chloride-activated potassium channel activity"/>
    <property type="evidence" value="ECO:0000315"/>
    <property type="project" value="UniProtKB"/>
</dbReference>
<dbReference type="GO" id="GO:0005228">
    <property type="term" value="F:intracellular sodium-activated potassium channel activity"/>
    <property type="evidence" value="ECO:0000266"/>
    <property type="project" value="RGD"/>
</dbReference>
<dbReference type="GO" id="GO:0015271">
    <property type="term" value="F:outward rectifier potassium channel activity"/>
    <property type="evidence" value="ECO:0000318"/>
    <property type="project" value="GO_Central"/>
</dbReference>
<dbReference type="GO" id="GO:0005267">
    <property type="term" value="F:potassium channel activity"/>
    <property type="evidence" value="ECO:0000314"/>
    <property type="project" value="MGI"/>
</dbReference>
<dbReference type="GO" id="GO:0097623">
    <property type="term" value="P:potassium ion export across plasma membrane"/>
    <property type="evidence" value="ECO:0000315"/>
    <property type="project" value="UniProtKB"/>
</dbReference>
<dbReference type="GO" id="GO:0071805">
    <property type="term" value="P:potassium ion transmembrane transport"/>
    <property type="evidence" value="ECO:0000318"/>
    <property type="project" value="GO_Central"/>
</dbReference>
<dbReference type="GO" id="GO:0006813">
    <property type="term" value="P:potassium ion transport"/>
    <property type="evidence" value="ECO:0000314"/>
    <property type="project" value="MGI"/>
</dbReference>
<dbReference type="FunFam" id="3.40.50.720:FF:000011">
    <property type="entry name" value="Potassium channel subfamily T member 1"/>
    <property type="match status" value="1"/>
</dbReference>
<dbReference type="FunFam" id="3.40.50.720:FF:000034">
    <property type="entry name" value="Potassium channel subfamily T member 1"/>
    <property type="match status" value="1"/>
</dbReference>
<dbReference type="FunFam" id="1.10.287.70:FF:000069">
    <property type="entry name" value="Potassium sodium-activated channel subfamily T member 1"/>
    <property type="match status" value="1"/>
</dbReference>
<dbReference type="Gene3D" id="1.10.287.70">
    <property type="match status" value="1"/>
</dbReference>
<dbReference type="Gene3D" id="3.40.50.720">
    <property type="entry name" value="NAD(P)-binding Rossmann-like Domain"/>
    <property type="match status" value="2"/>
</dbReference>
<dbReference type="InterPro" id="IPR003929">
    <property type="entry name" value="K_chnl_BK_asu"/>
</dbReference>
<dbReference type="InterPro" id="IPR013099">
    <property type="entry name" value="K_chnl_dom"/>
</dbReference>
<dbReference type="InterPro" id="IPR047871">
    <property type="entry name" value="K_chnl_Slo-like"/>
</dbReference>
<dbReference type="InterPro" id="IPR036291">
    <property type="entry name" value="NAD(P)-bd_dom_sf"/>
</dbReference>
<dbReference type="InterPro" id="IPR003148">
    <property type="entry name" value="RCK_N"/>
</dbReference>
<dbReference type="PANTHER" id="PTHR10027">
    <property type="entry name" value="CALCIUM-ACTIVATED POTASSIUM CHANNEL ALPHA CHAIN"/>
    <property type="match status" value="1"/>
</dbReference>
<dbReference type="PANTHER" id="PTHR10027:SF9">
    <property type="entry name" value="POTASSIUM CHANNEL SUBFAMILY T MEMBER 2"/>
    <property type="match status" value="1"/>
</dbReference>
<dbReference type="Pfam" id="PF03493">
    <property type="entry name" value="BK_channel_a"/>
    <property type="match status" value="1"/>
</dbReference>
<dbReference type="Pfam" id="PF07885">
    <property type="entry name" value="Ion_trans_2"/>
    <property type="match status" value="1"/>
</dbReference>
<dbReference type="Pfam" id="PF22614">
    <property type="entry name" value="Slo-like_RCK"/>
    <property type="match status" value="2"/>
</dbReference>
<dbReference type="SUPFAM" id="SSF51735">
    <property type="entry name" value="NAD(P)-binding Rossmann-fold domains"/>
    <property type="match status" value="1"/>
</dbReference>
<dbReference type="SUPFAM" id="SSF81324">
    <property type="entry name" value="Voltage-gated potassium channels"/>
    <property type="match status" value="1"/>
</dbReference>
<dbReference type="PROSITE" id="PS51201">
    <property type="entry name" value="RCK_N"/>
    <property type="match status" value="2"/>
</dbReference>
<evidence type="ECO:0000250" key="1">
    <source>
        <dbReference type="UniProtKB" id="Q5JUK3"/>
    </source>
</evidence>
<evidence type="ECO:0000250" key="2">
    <source>
        <dbReference type="UniProtKB" id="Q6UVM3"/>
    </source>
</evidence>
<evidence type="ECO:0000255" key="3"/>
<evidence type="ECO:0000255" key="4">
    <source>
        <dbReference type="PROSITE-ProRule" id="PRU00543"/>
    </source>
</evidence>
<evidence type="ECO:0000256" key="5">
    <source>
        <dbReference type="SAM" id="MobiDB-lite"/>
    </source>
</evidence>
<evidence type="ECO:0000269" key="6">
    <source>
    </source>
</evidence>
<evidence type="ECO:0000269" key="7">
    <source>
    </source>
</evidence>
<evidence type="ECO:0000269" key="8">
    <source>
    </source>
</evidence>
<evidence type="ECO:0000269" key="9">
    <source>
    </source>
</evidence>
<evidence type="ECO:0000269" key="10">
    <source>
    </source>
</evidence>
<evidence type="ECO:0000269" key="11">
    <source>
    </source>
</evidence>
<evidence type="ECO:0000305" key="12"/>
<gene>
    <name type="primary">Kcnt2</name>
    <name type="synonym">Slick</name>
</gene>
<sequence>MVDLESEVPPLPPRYRFRDLLLGDQGWQNDDRVQVEFYMNENTFKERLKLFFIKNQRSSLRIRLFNFSLKLLSCLLYIIRVLLEKPSQGNDWSHIFWVNRSLPLWGLQVSVALISLFETILLGYLSYKGNIWEQILRVPFILEIINAVPFIISIFWPTLRNLFVPVFLNCWLAKHALENMINDLHRAIQRTQSAMFNQVLILISTLLCLIFTCICGIQHLERIGKKLNLFDSLYFCIVTFSTVGFGDVTPETWSSKLFVVAMICVALVVLPIQFEQLAYLWMERQKSGGNYSRHRAQTEKHVVLCVSSLKIDLLMDFLNEFYAHPRLQDYYVVILCPTEMDVQVRRVLQIPMWSQRVIYLQGSALKDQDLLRAKMDNAEACFILSSRCEVDRTSSDHQTILRAWAVKDFAPNCPLYVQILKPENKFHIKFADHVVCEEEFKYAMLALNCICPATSTLITLLVHTSRGQCVCLCCREGQQSPEQWQKTYGRCSGNEVYHIVLEESTFFAEYEGKSFTYASFHAHKKFGVCLVGVRREDNKNILLNPGPRYIMNASDICFYINITKEENSAFKNQDQQRKSNVSRSFYHGPSRLPVHSIIASMGTVAIDLQDTSCRAASGPTLALPSEGGKELRRPSIAPVLEVADTSSIQTCDLLSDQSEDETTPDEETSSNLEYAKGYPPYSPYIGSSPTFCHLLQEKVPFCCLRLDKSCQHNYYEDAKAYGFKNKLIIVAAETAGNGLYNFIVPLRAYYRPKKELNPIVLLLDNPPDMHFLDAICWFPMVYYMVGSIDNLDDLLRCGVTFAANMVVVDKESTMSAEEDYMADAKTIVNVQTLFRLFSSLSIITELTHPANMRFMQFRAKDCYSLALSKLEKKERERGSNLAFMFRLPFAAGRVFSISMLDTLLYQSFVKDYMISITRLLLGLDTIPGSGFLCSMKITEDDLWIRTYARLYQKLCSSTGDVPIGIYRTESQKLTTSESQISISVEEWEDTKDVKDPGHHRSIHRNSTSSDQSDHPLLRRKSMQWARRLSRKGPKHSGKTAEKITQQRLNLYRRSERQELAELVKNRMKHLGLSTVGYDEMNDHQSTLSYILINPSPDTRLELNDVVYLIRPDPLSYLPNSEPSRKNSICNAAVQDSREETQL</sequence>
<accession>Q6UVM4</accession>
<reference key="1">
    <citation type="journal article" date="2003" name="J. Neurosci.">
        <title>Slick (Slo2.1), a rapidly-gating sodium-activated potassium channel inhibited by ATP.</title>
        <authorList>
            <person name="Bhattacharjee A."/>
            <person name="Joiner W.J."/>
            <person name="Wu M."/>
            <person name="Yang Y."/>
            <person name="Sigworth F.J."/>
            <person name="Kaczmarek L.K."/>
        </authorList>
    </citation>
    <scope>NUCLEOTIDE SEQUENCE [MRNA]</scope>
    <scope>FUNCTION</scope>
    <scope>TRANSPORTER ACTIVITY</scope>
    <scope>ACTIVITY REGULATION</scope>
    <scope>MUTAGENESIS OF GLY-1032</scope>
    <scope>TISSUE SPECIFICITY</scope>
    <source>
        <strain>Sprague-Dawley</strain>
    </source>
</reference>
<reference key="2">
    <citation type="journal article" date="2005" name="J. Comp. Neurol.">
        <title>Localization of the Na+-activated K+ channel Slick in the rat central nervous system.</title>
        <authorList>
            <person name="Bhattacharjee A."/>
            <person name="von Hehn C.A.A."/>
            <person name="Mei X."/>
            <person name="Kaczmarek L.K."/>
        </authorList>
    </citation>
    <scope>SUBCELLULAR LOCATION</scope>
    <scope>TISSUE SPECIFICITY</scope>
</reference>
<reference key="3">
    <citation type="journal article" date="2006" name="J. Neurosci.">
        <title>Opposite regulation of Slick and Slack K+ channels by neuromodulators.</title>
        <authorList>
            <person name="Santi C.M."/>
            <person name="Ferreira G."/>
            <person name="Yang B."/>
            <person name="Gazula V.R."/>
            <person name="Butler A."/>
            <person name="Wei A."/>
            <person name="Kaczmarek L.K."/>
            <person name="Salkoff L."/>
        </authorList>
    </citation>
    <scope>TISSUE SPECIFICITY</scope>
    <scope>SUBCELLULAR LOCATION</scope>
</reference>
<reference key="4">
    <citation type="journal article" date="2007" name="J. Neurosci.">
        <title>TrpC3/C7 and Slo2.1 are molecular targets for metabotropic glutamate receptor signaling in rat striatal cholinergic interneurons.</title>
        <authorList>
            <person name="Berg A.P."/>
            <person name="Sen N."/>
            <person name="Bayliss D.A."/>
        </authorList>
    </citation>
    <scope>FUNCTION</scope>
    <scope>TISSUE SPECIFICITY</scope>
    <scope>ACTIVITY REGULATION</scope>
</reference>
<reference key="5">
    <citation type="journal article" date="2009" name="J. Neurosci.">
        <title>The N-terminal domain of Slack determines the formation and trafficking of Slick/Slack heteromeric sodium-activated potassium channels.</title>
        <authorList>
            <person name="Chen H."/>
            <person name="Kronengold J."/>
            <person name="Yan Y."/>
            <person name="Gazula V.R."/>
            <person name="Brown M.R."/>
            <person name="Ma L."/>
            <person name="Ferreira G."/>
            <person name="Yang Y."/>
            <person name="Bhattacharjee A."/>
            <person name="Sigworth F.J."/>
            <person name="Salkoff L."/>
            <person name="Kaczmarek L.K."/>
        </authorList>
    </citation>
    <scope>FUNCTION</scope>
    <scope>SUBUNIT</scope>
    <scope>SUBCELLULAR LOCATION</scope>
    <scope>MUTAGENESIS OF GLN-276 AND TYR-279</scope>
</reference>
<reference key="6">
    <citation type="journal article" date="2017" name="Cell Rep.">
        <title>A De Novo Mutation in the Sodium-Activated Potassium Channel KCNT2 Alters Ion Selectivity and Causes Epileptic Encephalopathy.</title>
        <authorList>
            <person name="Gururaj S."/>
            <person name="Palmer E.E."/>
            <person name="Sheehan G.D."/>
            <person name="Kandula T."/>
            <person name="Macintosh R."/>
            <person name="Ying K."/>
            <person name="Morris P."/>
            <person name="Tao J."/>
            <person name="Dias K.R."/>
            <person name="Zhu Y."/>
            <person name="Dinger M.E."/>
            <person name="Cowley M.J."/>
            <person name="Kirk E.P."/>
            <person name="Roscioli T."/>
            <person name="Sachdev R."/>
            <person name="Duffey M.E."/>
            <person name="Bye A."/>
            <person name="Bhattacharjee A."/>
        </authorList>
    </citation>
    <scope>FUNCTION</scope>
    <scope>TRANSPORTER ACTIVITY</scope>
    <scope>ACTIVITY REGULATION</scope>
    <scope>MUTAGENESIS OF PHE-240</scope>
</reference>
<comment type="function">
    <text evidence="6 9 10 11">Sodium-activated and chloride-activated potassium channel. Produces rapidly activating outward rectifier K(+) currents (PubMed:14684870, PubMed:17699666, PubMed:19403831, PubMed:29069600). Contributes to regulate neuronal excitability (PubMed:29069600).</text>
</comment>
<comment type="catalytic activity">
    <reaction evidence="6 11">
        <text>K(+)(in) = K(+)(out)</text>
        <dbReference type="Rhea" id="RHEA:29463"/>
        <dbReference type="ChEBI" id="CHEBI:29103"/>
    </reaction>
</comment>
<comment type="activity regulation">
    <text evidence="2 6 9 11">Are normally in a closed state unless activated by an increase in intracellular Na(+) and Cl(-) (PubMed:14684870, PubMed:17699666, PubMed:29069600). Inhibited upon stimulation of G-protein coupled receptors, such as CHRM1 and GRM1 (By similarity). There is conflicting data about the effect of ATP on KNCT2 channels activity. Intracellular ATP was initially report to inhibit the channel activity (By similarity). However, others studies conclude that KNCT2 channels are not inhibited by intracellular ATP (PubMed:17699666).</text>
</comment>
<comment type="subunit">
    <text evidence="1 10">Homotetramer (By similarity). Forms heteromer with KCNT1; heteromeric channels differ from those of homomeric channels in their unitary conductance, kinetic behavior, subcellular localization, and response to activation of protein kinase C (PubMed:19403831).</text>
</comment>
<comment type="subcellular location">
    <subcellularLocation>
        <location evidence="7 8 10">Cell membrane</location>
        <topology evidence="3">Multi-pass membrane protein</topology>
    </subcellularLocation>
</comment>
<comment type="tissue specificity">
    <text evidence="6 7 8 9">Detected in brain, and at low levels in heart. Detected in brainstem, including auditory neurons such as the medial nucleus of the trapezoid body. Detected in the olfactory bulb, red nucleus, facial nucleus, pontine nucleus, oculomotor nucleus, substantia nigra, deep cerebellar nuclei, vestibular nucleus, and the thalamus. Detected in hippocampal CA1, CA2, and CA3 regions, the dentate gyrus, supraoptic nucleus, hypothalamus, dorsal root ganglion, and cortical layers II, III, and V. Detected in striatum cholinergic interneurons.</text>
</comment>
<comment type="domain">
    <text evidence="2">The consensus ATP binding site (1032-GPKHSGKT-1039) seems to be non-functional.</text>
</comment>
<comment type="PTM">
    <text evidence="2">Phosphorylated by protein kinase C. Phosphorylation of the C-terminal domain inhibits channel activity.</text>
</comment>
<comment type="similarity">
    <text evidence="12">Belongs to the potassium channel family. Calcium-activated (TC 1.A.1.3) subfamily. KCa4.2/KCNT2 sub-subfamily.</text>
</comment>
<name>KCNT2_RAT</name>
<proteinExistence type="evidence at protein level"/>